<name>LEPA_METSB</name>
<reference key="1">
    <citation type="journal article" date="2010" name="J. Bacteriol.">
        <title>Complete genome sequence of the aerobic facultative methanotroph Methylocella silvestris BL2.</title>
        <authorList>
            <person name="Chen Y."/>
            <person name="Crombie A."/>
            <person name="Rahman M.T."/>
            <person name="Dedysh S.N."/>
            <person name="Liesack W."/>
            <person name="Stott M.B."/>
            <person name="Alam M."/>
            <person name="Theisen A.R."/>
            <person name="Murrell J.C."/>
            <person name="Dunfield P.F."/>
        </authorList>
    </citation>
    <scope>NUCLEOTIDE SEQUENCE [LARGE SCALE GENOMIC DNA]</scope>
    <source>
        <strain>DSM 15510 / CIP 108128 / LMG 27833 / NCIMB 13906 / BL2</strain>
    </source>
</reference>
<protein>
    <recommendedName>
        <fullName evidence="1">Elongation factor 4</fullName>
        <shortName evidence="1">EF-4</shortName>
        <ecNumber evidence="1">3.6.5.n1</ecNumber>
    </recommendedName>
    <alternativeName>
        <fullName evidence="1">Ribosomal back-translocase LepA</fullName>
    </alternativeName>
</protein>
<gene>
    <name evidence="1" type="primary">lepA</name>
    <name type="ordered locus">Msil_1173</name>
</gene>
<comment type="function">
    <text evidence="1">Required for accurate and efficient protein synthesis under certain stress conditions. May act as a fidelity factor of the translation reaction, by catalyzing a one-codon backward translocation of tRNAs on improperly translocated ribosomes. Back-translocation proceeds from a post-translocation (POST) complex to a pre-translocation (PRE) complex, thus giving elongation factor G a second chance to translocate the tRNAs correctly. Binds to ribosomes in a GTP-dependent manner.</text>
</comment>
<comment type="catalytic activity">
    <reaction evidence="1">
        <text>GTP + H2O = GDP + phosphate + H(+)</text>
        <dbReference type="Rhea" id="RHEA:19669"/>
        <dbReference type="ChEBI" id="CHEBI:15377"/>
        <dbReference type="ChEBI" id="CHEBI:15378"/>
        <dbReference type="ChEBI" id="CHEBI:37565"/>
        <dbReference type="ChEBI" id="CHEBI:43474"/>
        <dbReference type="ChEBI" id="CHEBI:58189"/>
        <dbReference type="EC" id="3.6.5.n1"/>
    </reaction>
</comment>
<comment type="subcellular location">
    <subcellularLocation>
        <location evidence="1">Cell inner membrane</location>
        <topology evidence="1">Peripheral membrane protein</topology>
        <orientation evidence="1">Cytoplasmic side</orientation>
    </subcellularLocation>
</comment>
<comment type="similarity">
    <text evidence="1">Belongs to the TRAFAC class translation factor GTPase superfamily. Classic translation factor GTPase family. LepA subfamily.</text>
</comment>
<sequence>MTAHPIKNIRNFSIVAHIDHGKSTLADRLIQQTGAVAARDMVEQVLDSMDIERERGITIKAQTVRLEYKAADGEAYILNLMDTPGHVDFAYEVSRSLAACEGSLLVVDASQGVEAQTLANVYHALDAGHEIVPVLNKIDLPAAEPERIKQQIEDVIGLDASHAVMISAKTGVGIDLVLEAIVTRLPPPQGDETAPLKALLVDSWYDAYLGVVVLVRVIDGVLRKGQKIKMMAADAHYEVDRIGVFRPKMQDAEQLSPGEIGFITAQIKQVADTRVGDTITDERRPCAQALPGFKPAQPVVFCGLFPVDAADFEDLRAAMGRLRLNDASFSYEMESSAALGFGFRCGFLGLLHLEIIQERLEREFNLDLIATAPSVIYKIVQRDGDTIELHNPADMPDPTKIETIEEPWIRATILTPDDYLGAVLKLCQERRGVQVDLNYVGKRAMAVYDLPLNEVVFDFYDRLKSISKGYASFDYAITDYRPGDLVKMSILVNAEPVDALSMLVHRDRADTRGRVMVEKLKELIPPHMFQIPIQAAIGGKIIARETVRALRKDVTAKCYGGDASRKRKLLDKQKAGKKKMRQFGKVEIPQEAFIAALKMDG</sequence>
<feature type="chain" id="PRO_1000190819" description="Elongation factor 4">
    <location>
        <begin position="1"/>
        <end position="601"/>
    </location>
</feature>
<feature type="domain" description="tr-type G">
    <location>
        <begin position="7"/>
        <end position="189"/>
    </location>
</feature>
<feature type="binding site" evidence="1">
    <location>
        <begin position="19"/>
        <end position="24"/>
    </location>
    <ligand>
        <name>GTP</name>
        <dbReference type="ChEBI" id="CHEBI:37565"/>
    </ligand>
</feature>
<feature type="binding site" evidence="1">
    <location>
        <begin position="136"/>
        <end position="139"/>
    </location>
    <ligand>
        <name>GTP</name>
        <dbReference type="ChEBI" id="CHEBI:37565"/>
    </ligand>
</feature>
<dbReference type="EC" id="3.6.5.n1" evidence="1"/>
<dbReference type="EMBL" id="CP001280">
    <property type="protein sequence ID" value="ACK50142.1"/>
    <property type="molecule type" value="Genomic_DNA"/>
</dbReference>
<dbReference type="RefSeq" id="WP_012590212.1">
    <property type="nucleotide sequence ID" value="NC_011666.1"/>
</dbReference>
<dbReference type="SMR" id="B8ENL1"/>
<dbReference type="STRING" id="395965.Msil_1173"/>
<dbReference type="KEGG" id="msl:Msil_1173"/>
<dbReference type="eggNOG" id="COG0481">
    <property type="taxonomic scope" value="Bacteria"/>
</dbReference>
<dbReference type="HOGENOM" id="CLU_009995_3_3_5"/>
<dbReference type="OrthoDB" id="9802948at2"/>
<dbReference type="Proteomes" id="UP000002257">
    <property type="component" value="Chromosome"/>
</dbReference>
<dbReference type="GO" id="GO:0005886">
    <property type="term" value="C:plasma membrane"/>
    <property type="evidence" value="ECO:0007669"/>
    <property type="project" value="UniProtKB-SubCell"/>
</dbReference>
<dbReference type="GO" id="GO:0005525">
    <property type="term" value="F:GTP binding"/>
    <property type="evidence" value="ECO:0007669"/>
    <property type="project" value="UniProtKB-UniRule"/>
</dbReference>
<dbReference type="GO" id="GO:0003924">
    <property type="term" value="F:GTPase activity"/>
    <property type="evidence" value="ECO:0007669"/>
    <property type="project" value="UniProtKB-UniRule"/>
</dbReference>
<dbReference type="GO" id="GO:0097216">
    <property type="term" value="F:guanosine tetraphosphate binding"/>
    <property type="evidence" value="ECO:0007669"/>
    <property type="project" value="UniProtKB-ARBA"/>
</dbReference>
<dbReference type="GO" id="GO:0043022">
    <property type="term" value="F:ribosome binding"/>
    <property type="evidence" value="ECO:0007669"/>
    <property type="project" value="UniProtKB-UniRule"/>
</dbReference>
<dbReference type="GO" id="GO:0003746">
    <property type="term" value="F:translation elongation factor activity"/>
    <property type="evidence" value="ECO:0007669"/>
    <property type="project" value="UniProtKB-UniRule"/>
</dbReference>
<dbReference type="GO" id="GO:0045727">
    <property type="term" value="P:positive regulation of translation"/>
    <property type="evidence" value="ECO:0007669"/>
    <property type="project" value="UniProtKB-UniRule"/>
</dbReference>
<dbReference type="CDD" id="cd03699">
    <property type="entry name" value="EF4_II"/>
    <property type="match status" value="1"/>
</dbReference>
<dbReference type="CDD" id="cd16260">
    <property type="entry name" value="EF4_III"/>
    <property type="match status" value="1"/>
</dbReference>
<dbReference type="CDD" id="cd01890">
    <property type="entry name" value="LepA"/>
    <property type="match status" value="1"/>
</dbReference>
<dbReference type="CDD" id="cd03709">
    <property type="entry name" value="lepA_C"/>
    <property type="match status" value="1"/>
</dbReference>
<dbReference type="FunFam" id="3.40.50.300:FF:000078">
    <property type="entry name" value="Elongation factor 4"/>
    <property type="match status" value="1"/>
</dbReference>
<dbReference type="FunFam" id="2.40.30.10:FF:000015">
    <property type="entry name" value="Translation factor GUF1, mitochondrial"/>
    <property type="match status" value="1"/>
</dbReference>
<dbReference type="FunFam" id="3.30.70.240:FF:000007">
    <property type="entry name" value="Translation factor GUF1, mitochondrial"/>
    <property type="match status" value="1"/>
</dbReference>
<dbReference type="FunFam" id="3.30.70.2570:FF:000001">
    <property type="entry name" value="Translation factor GUF1, mitochondrial"/>
    <property type="match status" value="1"/>
</dbReference>
<dbReference type="FunFam" id="3.30.70.870:FF:000004">
    <property type="entry name" value="Translation factor GUF1, mitochondrial"/>
    <property type="match status" value="1"/>
</dbReference>
<dbReference type="Gene3D" id="3.30.70.240">
    <property type="match status" value="1"/>
</dbReference>
<dbReference type="Gene3D" id="3.30.70.2570">
    <property type="entry name" value="Elongation factor 4, C-terminal domain"/>
    <property type="match status" value="1"/>
</dbReference>
<dbReference type="Gene3D" id="3.30.70.870">
    <property type="entry name" value="Elongation Factor G (Translational Gtpase), domain 3"/>
    <property type="match status" value="1"/>
</dbReference>
<dbReference type="Gene3D" id="3.40.50.300">
    <property type="entry name" value="P-loop containing nucleotide triphosphate hydrolases"/>
    <property type="match status" value="1"/>
</dbReference>
<dbReference type="Gene3D" id="2.40.30.10">
    <property type="entry name" value="Translation factors"/>
    <property type="match status" value="1"/>
</dbReference>
<dbReference type="HAMAP" id="MF_00071">
    <property type="entry name" value="LepA"/>
    <property type="match status" value="1"/>
</dbReference>
<dbReference type="InterPro" id="IPR006297">
    <property type="entry name" value="EF-4"/>
</dbReference>
<dbReference type="InterPro" id="IPR035647">
    <property type="entry name" value="EFG_III/V"/>
</dbReference>
<dbReference type="InterPro" id="IPR000640">
    <property type="entry name" value="EFG_V-like"/>
</dbReference>
<dbReference type="InterPro" id="IPR004161">
    <property type="entry name" value="EFTu-like_2"/>
</dbReference>
<dbReference type="InterPro" id="IPR031157">
    <property type="entry name" value="G_TR_CS"/>
</dbReference>
<dbReference type="InterPro" id="IPR038363">
    <property type="entry name" value="LepA_C_sf"/>
</dbReference>
<dbReference type="InterPro" id="IPR013842">
    <property type="entry name" value="LepA_CTD"/>
</dbReference>
<dbReference type="InterPro" id="IPR035654">
    <property type="entry name" value="LepA_IV"/>
</dbReference>
<dbReference type="InterPro" id="IPR027417">
    <property type="entry name" value="P-loop_NTPase"/>
</dbReference>
<dbReference type="InterPro" id="IPR005225">
    <property type="entry name" value="Small_GTP-bd"/>
</dbReference>
<dbReference type="InterPro" id="IPR000795">
    <property type="entry name" value="T_Tr_GTP-bd_dom"/>
</dbReference>
<dbReference type="InterPro" id="IPR009000">
    <property type="entry name" value="Transl_B-barrel_sf"/>
</dbReference>
<dbReference type="NCBIfam" id="TIGR01393">
    <property type="entry name" value="lepA"/>
    <property type="match status" value="1"/>
</dbReference>
<dbReference type="NCBIfam" id="TIGR00231">
    <property type="entry name" value="small_GTP"/>
    <property type="match status" value="1"/>
</dbReference>
<dbReference type="PANTHER" id="PTHR43512:SF4">
    <property type="entry name" value="TRANSLATION FACTOR GUF1 HOMOLOG, CHLOROPLASTIC"/>
    <property type="match status" value="1"/>
</dbReference>
<dbReference type="PANTHER" id="PTHR43512">
    <property type="entry name" value="TRANSLATION FACTOR GUF1-RELATED"/>
    <property type="match status" value="1"/>
</dbReference>
<dbReference type="Pfam" id="PF00679">
    <property type="entry name" value="EFG_C"/>
    <property type="match status" value="1"/>
</dbReference>
<dbReference type="Pfam" id="PF00009">
    <property type="entry name" value="GTP_EFTU"/>
    <property type="match status" value="1"/>
</dbReference>
<dbReference type="Pfam" id="PF03144">
    <property type="entry name" value="GTP_EFTU_D2"/>
    <property type="match status" value="1"/>
</dbReference>
<dbReference type="Pfam" id="PF06421">
    <property type="entry name" value="LepA_C"/>
    <property type="match status" value="1"/>
</dbReference>
<dbReference type="PRINTS" id="PR00315">
    <property type="entry name" value="ELONGATNFCT"/>
</dbReference>
<dbReference type="SUPFAM" id="SSF54980">
    <property type="entry name" value="EF-G C-terminal domain-like"/>
    <property type="match status" value="2"/>
</dbReference>
<dbReference type="SUPFAM" id="SSF52540">
    <property type="entry name" value="P-loop containing nucleoside triphosphate hydrolases"/>
    <property type="match status" value="1"/>
</dbReference>
<dbReference type="SUPFAM" id="SSF50447">
    <property type="entry name" value="Translation proteins"/>
    <property type="match status" value="1"/>
</dbReference>
<dbReference type="PROSITE" id="PS00301">
    <property type="entry name" value="G_TR_1"/>
    <property type="match status" value="1"/>
</dbReference>
<dbReference type="PROSITE" id="PS51722">
    <property type="entry name" value="G_TR_2"/>
    <property type="match status" value="1"/>
</dbReference>
<keyword id="KW-0997">Cell inner membrane</keyword>
<keyword id="KW-1003">Cell membrane</keyword>
<keyword id="KW-0342">GTP-binding</keyword>
<keyword id="KW-0378">Hydrolase</keyword>
<keyword id="KW-0472">Membrane</keyword>
<keyword id="KW-0547">Nucleotide-binding</keyword>
<keyword id="KW-0648">Protein biosynthesis</keyword>
<keyword id="KW-1185">Reference proteome</keyword>
<organism>
    <name type="scientific">Methylocella silvestris (strain DSM 15510 / CIP 108128 / LMG 27833 / NCIMB 13906 / BL2)</name>
    <dbReference type="NCBI Taxonomy" id="395965"/>
    <lineage>
        <taxon>Bacteria</taxon>
        <taxon>Pseudomonadati</taxon>
        <taxon>Pseudomonadota</taxon>
        <taxon>Alphaproteobacteria</taxon>
        <taxon>Hyphomicrobiales</taxon>
        <taxon>Beijerinckiaceae</taxon>
        <taxon>Methylocella</taxon>
    </lineage>
</organism>
<proteinExistence type="inferred from homology"/>
<accession>B8ENL1</accession>
<evidence type="ECO:0000255" key="1">
    <source>
        <dbReference type="HAMAP-Rule" id="MF_00071"/>
    </source>
</evidence>